<comment type="subunit">
    <text evidence="1 2">Component of the mitochondrial ribosome large subunit (39S) which comprises a 16S rRNA and about 50 distinct proteins (By similarity). Interacts with OXA1L (By similarity).</text>
</comment>
<comment type="subcellular location">
    <subcellularLocation>
        <location evidence="2">Mitochondrion</location>
    </subcellularLocation>
</comment>
<comment type="similarity">
    <text evidence="4">Belongs to the mitochondrion-specific ribosomal protein mL51 family.</text>
</comment>
<sequence length="128" mass="15103">MAGSVPWAASRRLWGWVPSACRSFSLGVPRLAFVRLTLPPPKVVDRWNEKRALFGVYDNIGILGNFEKHPKELIKGPVWLRGWRGNELQRCVRKKKFVGNRMFIEDLHNLNKRISYLYKHFNRHGKYR</sequence>
<protein>
    <recommendedName>
        <fullName evidence="4">Large ribosomal subunit protein mL51</fullName>
    </recommendedName>
    <alternativeName>
        <fullName>39S ribosomal protein L51, mitochondrial</fullName>
        <shortName>L51mt</shortName>
        <shortName>MRP-L51</shortName>
    </alternativeName>
    <alternativeName>
        <fullName>bMRP-64</fullName>
        <shortName>bMRP64</shortName>
    </alternativeName>
</protein>
<organism>
    <name type="scientific">Mus musculus</name>
    <name type="common">Mouse</name>
    <dbReference type="NCBI Taxonomy" id="10090"/>
    <lineage>
        <taxon>Eukaryota</taxon>
        <taxon>Metazoa</taxon>
        <taxon>Chordata</taxon>
        <taxon>Craniata</taxon>
        <taxon>Vertebrata</taxon>
        <taxon>Euteleostomi</taxon>
        <taxon>Mammalia</taxon>
        <taxon>Eutheria</taxon>
        <taxon>Euarchontoglires</taxon>
        <taxon>Glires</taxon>
        <taxon>Rodentia</taxon>
        <taxon>Myomorpha</taxon>
        <taxon>Muroidea</taxon>
        <taxon>Muridae</taxon>
        <taxon>Murinae</taxon>
        <taxon>Mus</taxon>
        <taxon>Mus</taxon>
    </lineage>
</organism>
<evidence type="ECO:0000250" key="1">
    <source>
        <dbReference type="UniProtKB" id="P0C2B6"/>
    </source>
</evidence>
<evidence type="ECO:0000250" key="2">
    <source>
        <dbReference type="UniProtKB" id="Q4U2R6"/>
    </source>
</evidence>
<evidence type="ECO:0000255" key="3"/>
<evidence type="ECO:0000305" key="4"/>
<reference key="1">
    <citation type="journal article" date="2001" name="J. Biol. Chem.">
        <title>Proteomic analysis of the mammalian mitochondrial ribosome. Identification of protein components in the 28S small subunit.</title>
        <authorList>
            <person name="Suzuki T."/>
            <person name="Terasaki M."/>
            <person name="Takemoto-Hori C."/>
            <person name="Hanada T."/>
            <person name="Ueda T."/>
            <person name="Wada A."/>
            <person name="Watanabe K."/>
        </authorList>
    </citation>
    <scope>NUCLEOTIDE SEQUENCE [MRNA]</scope>
</reference>
<reference key="2">
    <citation type="journal article" date="2005" name="Science">
        <title>The transcriptional landscape of the mammalian genome.</title>
        <authorList>
            <person name="Carninci P."/>
            <person name="Kasukawa T."/>
            <person name="Katayama S."/>
            <person name="Gough J."/>
            <person name="Frith M.C."/>
            <person name="Maeda N."/>
            <person name="Oyama R."/>
            <person name="Ravasi T."/>
            <person name="Lenhard B."/>
            <person name="Wells C."/>
            <person name="Kodzius R."/>
            <person name="Shimokawa K."/>
            <person name="Bajic V.B."/>
            <person name="Brenner S.E."/>
            <person name="Batalov S."/>
            <person name="Forrest A.R."/>
            <person name="Zavolan M."/>
            <person name="Davis M.J."/>
            <person name="Wilming L.G."/>
            <person name="Aidinis V."/>
            <person name="Allen J.E."/>
            <person name="Ambesi-Impiombato A."/>
            <person name="Apweiler R."/>
            <person name="Aturaliya R.N."/>
            <person name="Bailey T.L."/>
            <person name="Bansal M."/>
            <person name="Baxter L."/>
            <person name="Beisel K.W."/>
            <person name="Bersano T."/>
            <person name="Bono H."/>
            <person name="Chalk A.M."/>
            <person name="Chiu K.P."/>
            <person name="Choudhary V."/>
            <person name="Christoffels A."/>
            <person name="Clutterbuck D.R."/>
            <person name="Crowe M.L."/>
            <person name="Dalla E."/>
            <person name="Dalrymple B.P."/>
            <person name="de Bono B."/>
            <person name="Della Gatta G."/>
            <person name="di Bernardo D."/>
            <person name="Down T."/>
            <person name="Engstrom P."/>
            <person name="Fagiolini M."/>
            <person name="Faulkner G."/>
            <person name="Fletcher C.F."/>
            <person name="Fukushima T."/>
            <person name="Furuno M."/>
            <person name="Futaki S."/>
            <person name="Gariboldi M."/>
            <person name="Georgii-Hemming P."/>
            <person name="Gingeras T.R."/>
            <person name="Gojobori T."/>
            <person name="Green R.E."/>
            <person name="Gustincich S."/>
            <person name="Harbers M."/>
            <person name="Hayashi Y."/>
            <person name="Hensch T.K."/>
            <person name="Hirokawa N."/>
            <person name="Hill D."/>
            <person name="Huminiecki L."/>
            <person name="Iacono M."/>
            <person name="Ikeo K."/>
            <person name="Iwama A."/>
            <person name="Ishikawa T."/>
            <person name="Jakt M."/>
            <person name="Kanapin A."/>
            <person name="Katoh M."/>
            <person name="Kawasawa Y."/>
            <person name="Kelso J."/>
            <person name="Kitamura H."/>
            <person name="Kitano H."/>
            <person name="Kollias G."/>
            <person name="Krishnan S.P."/>
            <person name="Kruger A."/>
            <person name="Kummerfeld S.K."/>
            <person name="Kurochkin I.V."/>
            <person name="Lareau L.F."/>
            <person name="Lazarevic D."/>
            <person name="Lipovich L."/>
            <person name="Liu J."/>
            <person name="Liuni S."/>
            <person name="McWilliam S."/>
            <person name="Madan Babu M."/>
            <person name="Madera M."/>
            <person name="Marchionni L."/>
            <person name="Matsuda H."/>
            <person name="Matsuzawa S."/>
            <person name="Miki H."/>
            <person name="Mignone F."/>
            <person name="Miyake S."/>
            <person name="Morris K."/>
            <person name="Mottagui-Tabar S."/>
            <person name="Mulder N."/>
            <person name="Nakano N."/>
            <person name="Nakauchi H."/>
            <person name="Ng P."/>
            <person name="Nilsson R."/>
            <person name="Nishiguchi S."/>
            <person name="Nishikawa S."/>
            <person name="Nori F."/>
            <person name="Ohara O."/>
            <person name="Okazaki Y."/>
            <person name="Orlando V."/>
            <person name="Pang K.C."/>
            <person name="Pavan W.J."/>
            <person name="Pavesi G."/>
            <person name="Pesole G."/>
            <person name="Petrovsky N."/>
            <person name="Piazza S."/>
            <person name="Reed J."/>
            <person name="Reid J.F."/>
            <person name="Ring B.Z."/>
            <person name="Ringwald M."/>
            <person name="Rost B."/>
            <person name="Ruan Y."/>
            <person name="Salzberg S.L."/>
            <person name="Sandelin A."/>
            <person name="Schneider C."/>
            <person name="Schoenbach C."/>
            <person name="Sekiguchi K."/>
            <person name="Semple C.A."/>
            <person name="Seno S."/>
            <person name="Sessa L."/>
            <person name="Sheng Y."/>
            <person name="Shibata Y."/>
            <person name="Shimada H."/>
            <person name="Shimada K."/>
            <person name="Silva D."/>
            <person name="Sinclair B."/>
            <person name="Sperling S."/>
            <person name="Stupka E."/>
            <person name="Sugiura K."/>
            <person name="Sultana R."/>
            <person name="Takenaka Y."/>
            <person name="Taki K."/>
            <person name="Tammoja K."/>
            <person name="Tan S.L."/>
            <person name="Tang S."/>
            <person name="Taylor M.S."/>
            <person name="Tegner J."/>
            <person name="Teichmann S.A."/>
            <person name="Ueda H.R."/>
            <person name="van Nimwegen E."/>
            <person name="Verardo R."/>
            <person name="Wei C.L."/>
            <person name="Yagi K."/>
            <person name="Yamanishi H."/>
            <person name="Zabarovsky E."/>
            <person name="Zhu S."/>
            <person name="Zimmer A."/>
            <person name="Hide W."/>
            <person name="Bult C."/>
            <person name="Grimmond S.M."/>
            <person name="Teasdale R.D."/>
            <person name="Liu E.T."/>
            <person name="Brusic V."/>
            <person name="Quackenbush J."/>
            <person name="Wahlestedt C."/>
            <person name="Mattick J.S."/>
            <person name="Hume D.A."/>
            <person name="Kai C."/>
            <person name="Sasaki D."/>
            <person name="Tomaru Y."/>
            <person name="Fukuda S."/>
            <person name="Kanamori-Katayama M."/>
            <person name="Suzuki M."/>
            <person name="Aoki J."/>
            <person name="Arakawa T."/>
            <person name="Iida J."/>
            <person name="Imamura K."/>
            <person name="Itoh M."/>
            <person name="Kato T."/>
            <person name="Kawaji H."/>
            <person name="Kawagashira N."/>
            <person name="Kawashima T."/>
            <person name="Kojima M."/>
            <person name="Kondo S."/>
            <person name="Konno H."/>
            <person name="Nakano K."/>
            <person name="Ninomiya N."/>
            <person name="Nishio T."/>
            <person name="Okada M."/>
            <person name="Plessy C."/>
            <person name="Shibata K."/>
            <person name="Shiraki T."/>
            <person name="Suzuki S."/>
            <person name="Tagami M."/>
            <person name="Waki K."/>
            <person name="Watahiki A."/>
            <person name="Okamura-Oho Y."/>
            <person name="Suzuki H."/>
            <person name="Kawai J."/>
            <person name="Hayashizaki Y."/>
        </authorList>
    </citation>
    <scope>NUCLEOTIDE SEQUENCE [LARGE SCALE MRNA]</scope>
    <source>
        <strain>C57BL/6J</strain>
        <tissue>Testis</tissue>
    </source>
</reference>
<reference key="3">
    <citation type="journal article" date="2004" name="Genome Res.">
        <title>The status, quality, and expansion of the NIH full-length cDNA project: the Mammalian Gene Collection (MGC).</title>
        <authorList>
            <consortium name="The MGC Project Team"/>
        </authorList>
    </citation>
    <scope>NUCLEOTIDE SEQUENCE [LARGE SCALE MRNA]</scope>
    <source>
        <tissue>Heart</tissue>
        <tissue>Mammary gland</tissue>
        <tissue>Mammary tumor</tissue>
    </source>
</reference>
<reference key="4">
    <citation type="journal article" date="2010" name="Cell">
        <title>A tissue-specific atlas of mouse protein phosphorylation and expression.</title>
        <authorList>
            <person name="Huttlin E.L."/>
            <person name="Jedrychowski M.P."/>
            <person name="Elias J.E."/>
            <person name="Goswami T."/>
            <person name="Rad R."/>
            <person name="Beausoleil S.A."/>
            <person name="Villen J."/>
            <person name="Haas W."/>
            <person name="Sowa M.E."/>
            <person name="Gygi S.P."/>
        </authorList>
    </citation>
    <scope>IDENTIFICATION BY MASS SPECTROMETRY [LARGE SCALE ANALYSIS]</scope>
    <source>
        <tissue>Brown adipose tissue</tissue>
        <tissue>Heart</tissue>
        <tissue>Kidney</tissue>
    </source>
</reference>
<accession>Q9CPY1</accession>
<accession>Q9CWZ9</accession>
<name>RM51_MOUSE</name>
<proteinExistence type="evidence at protein level"/>
<keyword id="KW-0496">Mitochondrion</keyword>
<keyword id="KW-1185">Reference proteome</keyword>
<keyword id="KW-0687">Ribonucleoprotein</keyword>
<keyword id="KW-0689">Ribosomal protein</keyword>
<keyword id="KW-0809">Transit peptide</keyword>
<feature type="transit peptide" description="Mitochondrion" evidence="3">
    <location>
        <begin position="1"/>
        <end position="31"/>
    </location>
</feature>
<feature type="chain" id="PRO_0000273083" description="Large ribosomal subunit protein mL51">
    <location>
        <begin position="32"/>
        <end position="128"/>
    </location>
</feature>
<feature type="sequence conflict" description="In Ref. 2; BAB26808." evidence="4" ref="2">
    <original>A</original>
    <variation>E</variation>
    <location>
        <position position="8"/>
    </location>
</feature>
<feature type="sequence conflict" description="In Ref. 2; BAB26808." evidence="4" ref="2">
    <original>L</original>
    <variation>M</variation>
    <location>
        <position position="13"/>
    </location>
</feature>
<dbReference type="EMBL" id="AB049960">
    <property type="protein sequence ID" value="BAB41013.1"/>
    <property type="molecule type" value="mRNA"/>
</dbReference>
<dbReference type="EMBL" id="AK007256">
    <property type="protein sequence ID" value="BAB24918.1"/>
    <property type="molecule type" value="mRNA"/>
</dbReference>
<dbReference type="EMBL" id="AK010268">
    <property type="protein sequence ID" value="BAB26808.1"/>
    <property type="molecule type" value="mRNA"/>
</dbReference>
<dbReference type="EMBL" id="AK011966">
    <property type="protein sequence ID" value="BAB27944.1"/>
    <property type="molecule type" value="mRNA"/>
</dbReference>
<dbReference type="EMBL" id="AK012126">
    <property type="protein sequence ID" value="BAB28048.1"/>
    <property type="molecule type" value="mRNA"/>
</dbReference>
<dbReference type="EMBL" id="AK012524">
    <property type="protein sequence ID" value="BAB28295.1"/>
    <property type="molecule type" value="mRNA"/>
</dbReference>
<dbReference type="EMBL" id="AK076130">
    <property type="protein sequence ID" value="BAC36207.1"/>
    <property type="molecule type" value="mRNA"/>
</dbReference>
<dbReference type="EMBL" id="BC021535">
    <property type="protein sequence ID" value="AAH21535.1"/>
    <property type="molecule type" value="mRNA"/>
</dbReference>
<dbReference type="EMBL" id="BC094621">
    <property type="protein sequence ID" value="AAH94621.1"/>
    <property type="molecule type" value="mRNA"/>
</dbReference>
<dbReference type="EMBL" id="BC100602">
    <property type="protein sequence ID" value="AAI00603.1"/>
    <property type="molecule type" value="mRNA"/>
</dbReference>
<dbReference type="CCDS" id="CCDS20545.1"/>
<dbReference type="RefSeq" id="NP_079871.1">
    <property type="nucleotide sequence ID" value="NM_025595.3"/>
</dbReference>
<dbReference type="SMR" id="Q9CPY1"/>
<dbReference type="ComplexPortal" id="CPX-5302">
    <property type="entry name" value="39S mitochondrial large ribosomal subunit"/>
</dbReference>
<dbReference type="FunCoup" id="Q9CPY1">
    <property type="interactions" value="952"/>
</dbReference>
<dbReference type="STRING" id="10090.ENSMUSP00000032485"/>
<dbReference type="PaxDb" id="10090-ENSMUSP00000032485"/>
<dbReference type="PeptideAtlas" id="Q9CPY1"/>
<dbReference type="ProteomicsDB" id="300405"/>
<dbReference type="Pumba" id="Q9CPY1"/>
<dbReference type="Antibodypedia" id="22416">
    <property type="antibodies" value="153 antibodies from 24 providers"/>
</dbReference>
<dbReference type="DNASU" id="66493"/>
<dbReference type="Ensembl" id="ENSMUST00000032485.7">
    <property type="protein sequence ID" value="ENSMUSP00000032485.6"/>
    <property type="gene ID" value="ENSMUSG00000030335.7"/>
</dbReference>
<dbReference type="GeneID" id="66493"/>
<dbReference type="KEGG" id="mmu:66493"/>
<dbReference type="UCSC" id="uc009dtw.1">
    <property type="organism name" value="mouse"/>
</dbReference>
<dbReference type="AGR" id="MGI:1913743"/>
<dbReference type="CTD" id="51258"/>
<dbReference type="MGI" id="MGI:1913743">
    <property type="gene designation" value="Mrpl51"/>
</dbReference>
<dbReference type="VEuPathDB" id="HostDB:ENSMUSG00000030335"/>
<dbReference type="eggNOG" id="KOG4045">
    <property type="taxonomic scope" value="Eukaryota"/>
</dbReference>
<dbReference type="GeneTree" id="ENSGT00390000018821"/>
<dbReference type="HOGENOM" id="CLU_150741_0_0_1"/>
<dbReference type="InParanoid" id="Q9CPY1"/>
<dbReference type="OMA" id="LIIAPCW"/>
<dbReference type="OrthoDB" id="10059330at2759"/>
<dbReference type="PhylomeDB" id="Q9CPY1"/>
<dbReference type="TreeFam" id="TF106130"/>
<dbReference type="Reactome" id="R-MMU-5389840">
    <property type="pathway name" value="Mitochondrial translation elongation"/>
</dbReference>
<dbReference type="Reactome" id="R-MMU-5419276">
    <property type="pathway name" value="Mitochondrial translation termination"/>
</dbReference>
<dbReference type="BioGRID-ORCS" id="66493">
    <property type="hits" value="28 hits in 81 CRISPR screens"/>
</dbReference>
<dbReference type="ChiTaRS" id="Mrpl51">
    <property type="organism name" value="mouse"/>
</dbReference>
<dbReference type="PRO" id="PR:Q9CPY1"/>
<dbReference type="Proteomes" id="UP000000589">
    <property type="component" value="Chromosome 6"/>
</dbReference>
<dbReference type="RNAct" id="Q9CPY1">
    <property type="molecule type" value="protein"/>
</dbReference>
<dbReference type="Bgee" id="ENSMUSG00000030335">
    <property type="expression patterns" value="Expressed in hindlimb stylopod muscle and 191 other cell types or tissues"/>
</dbReference>
<dbReference type="GO" id="GO:0005743">
    <property type="term" value="C:mitochondrial inner membrane"/>
    <property type="evidence" value="ECO:0000303"/>
    <property type="project" value="ComplexPortal"/>
</dbReference>
<dbReference type="GO" id="GO:0005762">
    <property type="term" value="C:mitochondrial large ribosomal subunit"/>
    <property type="evidence" value="ECO:0000250"/>
    <property type="project" value="UniProtKB"/>
</dbReference>
<dbReference type="GO" id="GO:0005761">
    <property type="term" value="C:mitochondrial ribosome"/>
    <property type="evidence" value="ECO:0000314"/>
    <property type="project" value="MGI"/>
</dbReference>
<dbReference type="GO" id="GO:0005739">
    <property type="term" value="C:mitochondrion"/>
    <property type="evidence" value="ECO:0007005"/>
    <property type="project" value="MGI"/>
</dbReference>
<dbReference type="GO" id="GO:0003735">
    <property type="term" value="F:structural constituent of ribosome"/>
    <property type="evidence" value="ECO:0000314"/>
    <property type="project" value="MGI"/>
</dbReference>
<dbReference type="GO" id="GO:0032543">
    <property type="term" value="P:mitochondrial translation"/>
    <property type="evidence" value="ECO:0000250"/>
    <property type="project" value="UniProtKB"/>
</dbReference>
<dbReference type="GO" id="GO:0006412">
    <property type="term" value="P:translation"/>
    <property type="evidence" value="ECO:0000314"/>
    <property type="project" value="MGI"/>
</dbReference>
<dbReference type="InterPro" id="IPR019373">
    <property type="entry name" value="Ribosomal_mL51"/>
</dbReference>
<dbReference type="PANTHER" id="PTHR13409:SF0">
    <property type="entry name" value="LARGE RIBOSOMAL SUBUNIT PROTEIN ML51"/>
    <property type="match status" value="1"/>
</dbReference>
<dbReference type="PANTHER" id="PTHR13409">
    <property type="entry name" value="MITOCHONDRIAL 39S RIBOSOMAL PROTEIN L51"/>
    <property type="match status" value="1"/>
</dbReference>
<dbReference type="Pfam" id="PF10244">
    <property type="entry name" value="MRP-L51"/>
    <property type="match status" value="1"/>
</dbReference>
<gene>
    <name type="primary">Mrpl51</name>
    <name type="synonym">Mrp64</name>
</gene>